<reference key="1">
    <citation type="journal article" date="2015" name="Genome Announc.">
        <title>Complete genome sequence of Anaeromyxobacter sp. Fw109-5, an anaerobic, metal-reducing bacterium isolated from a contaminated subsurface environment.</title>
        <authorList>
            <person name="Hwang C."/>
            <person name="Copeland A."/>
            <person name="Lucas S."/>
            <person name="Lapidus A."/>
            <person name="Barry K."/>
            <person name="Glavina Del Rio T."/>
            <person name="Dalin E."/>
            <person name="Tice H."/>
            <person name="Pitluck S."/>
            <person name="Sims D."/>
            <person name="Brettin T."/>
            <person name="Bruce D.C."/>
            <person name="Detter J.C."/>
            <person name="Han C.S."/>
            <person name="Schmutz J."/>
            <person name="Larimer F.W."/>
            <person name="Land M.L."/>
            <person name="Hauser L.J."/>
            <person name="Kyrpides N."/>
            <person name="Lykidis A."/>
            <person name="Richardson P."/>
            <person name="Belieav A."/>
            <person name="Sanford R.A."/>
            <person name="Loeffler F.E."/>
            <person name="Fields M.W."/>
        </authorList>
    </citation>
    <scope>NUCLEOTIDE SEQUENCE [LARGE SCALE GENOMIC DNA]</scope>
    <source>
        <strain>Fw109-5</strain>
    </source>
</reference>
<name>RL19_ANADF</name>
<protein>
    <recommendedName>
        <fullName evidence="1">Large ribosomal subunit protein bL19</fullName>
    </recommendedName>
    <alternativeName>
        <fullName evidence="3">50S ribosomal protein L19</fullName>
    </alternativeName>
</protein>
<sequence length="134" mass="14870">MLRKAIADIQAKYVRKDVPELRSGDSVRVHTKIKEGDKERIQVFEGVVIAYRRGTPGSSMFTVRKMSYGVGVERMFPVHSPRIDRIEVTGHGEVRRSRLYYLRGLQGKAARLHQEEGPSSAAPASTPPAAAPQA</sequence>
<comment type="function">
    <text evidence="1">This protein is located at the 30S-50S ribosomal subunit interface and may play a role in the structure and function of the aminoacyl-tRNA binding site.</text>
</comment>
<comment type="similarity">
    <text evidence="1">Belongs to the bacterial ribosomal protein bL19 family.</text>
</comment>
<gene>
    <name evidence="1" type="primary">rplS</name>
    <name type="ordered locus">Anae109_1945</name>
</gene>
<dbReference type="EMBL" id="CP000769">
    <property type="protein sequence ID" value="ABS26148.1"/>
    <property type="molecule type" value="Genomic_DNA"/>
</dbReference>
<dbReference type="RefSeq" id="WP_012096726.1">
    <property type="nucleotide sequence ID" value="NC_009675.1"/>
</dbReference>
<dbReference type="SMR" id="A7HBQ2"/>
<dbReference type="STRING" id="404589.Anae109_1945"/>
<dbReference type="KEGG" id="afw:Anae109_1945"/>
<dbReference type="eggNOG" id="COG0335">
    <property type="taxonomic scope" value="Bacteria"/>
</dbReference>
<dbReference type="HOGENOM" id="CLU_103507_2_2_7"/>
<dbReference type="OrthoDB" id="9803541at2"/>
<dbReference type="Proteomes" id="UP000006382">
    <property type="component" value="Chromosome"/>
</dbReference>
<dbReference type="GO" id="GO:0022625">
    <property type="term" value="C:cytosolic large ribosomal subunit"/>
    <property type="evidence" value="ECO:0007669"/>
    <property type="project" value="TreeGrafter"/>
</dbReference>
<dbReference type="GO" id="GO:0003735">
    <property type="term" value="F:structural constituent of ribosome"/>
    <property type="evidence" value="ECO:0007669"/>
    <property type="project" value="InterPro"/>
</dbReference>
<dbReference type="GO" id="GO:0006412">
    <property type="term" value="P:translation"/>
    <property type="evidence" value="ECO:0007669"/>
    <property type="project" value="UniProtKB-UniRule"/>
</dbReference>
<dbReference type="Gene3D" id="2.30.30.790">
    <property type="match status" value="1"/>
</dbReference>
<dbReference type="HAMAP" id="MF_00402">
    <property type="entry name" value="Ribosomal_bL19"/>
    <property type="match status" value="1"/>
</dbReference>
<dbReference type="InterPro" id="IPR001857">
    <property type="entry name" value="Ribosomal_bL19"/>
</dbReference>
<dbReference type="InterPro" id="IPR038657">
    <property type="entry name" value="Ribosomal_bL19_sf"/>
</dbReference>
<dbReference type="InterPro" id="IPR008991">
    <property type="entry name" value="Translation_prot_SH3-like_sf"/>
</dbReference>
<dbReference type="NCBIfam" id="TIGR01024">
    <property type="entry name" value="rplS_bact"/>
    <property type="match status" value="1"/>
</dbReference>
<dbReference type="PANTHER" id="PTHR15680:SF9">
    <property type="entry name" value="LARGE RIBOSOMAL SUBUNIT PROTEIN BL19M"/>
    <property type="match status" value="1"/>
</dbReference>
<dbReference type="PANTHER" id="PTHR15680">
    <property type="entry name" value="RIBOSOMAL PROTEIN L19"/>
    <property type="match status" value="1"/>
</dbReference>
<dbReference type="Pfam" id="PF01245">
    <property type="entry name" value="Ribosomal_L19"/>
    <property type="match status" value="1"/>
</dbReference>
<dbReference type="PIRSF" id="PIRSF002191">
    <property type="entry name" value="Ribosomal_L19"/>
    <property type="match status" value="1"/>
</dbReference>
<dbReference type="PRINTS" id="PR00061">
    <property type="entry name" value="RIBOSOMALL19"/>
</dbReference>
<dbReference type="SUPFAM" id="SSF50104">
    <property type="entry name" value="Translation proteins SH3-like domain"/>
    <property type="match status" value="1"/>
</dbReference>
<keyword id="KW-1185">Reference proteome</keyword>
<keyword id="KW-0687">Ribonucleoprotein</keyword>
<keyword id="KW-0689">Ribosomal protein</keyword>
<proteinExistence type="inferred from homology"/>
<evidence type="ECO:0000255" key="1">
    <source>
        <dbReference type="HAMAP-Rule" id="MF_00402"/>
    </source>
</evidence>
<evidence type="ECO:0000256" key="2">
    <source>
        <dbReference type="SAM" id="MobiDB-lite"/>
    </source>
</evidence>
<evidence type="ECO:0000305" key="3"/>
<organism>
    <name type="scientific">Anaeromyxobacter sp. (strain Fw109-5)</name>
    <dbReference type="NCBI Taxonomy" id="404589"/>
    <lineage>
        <taxon>Bacteria</taxon>
        <taxon>Pseudomonadati</taxon>
        <taxon>Myxococcota</taxon>
        <taxon>Myxococcia</taxon>
        <taxon>Myxococcales</taxon>
        <taxon>Cystobacterineae</taxon>
        <taxon>Anaeromyxobacteraceae</taxon>
        <taxon>Anaeromyxobacter</taxon>
    </lineage>
</organism>
<feature type="chain" id="PRO_1000049631" description="Large ribosomal subunit protein bL19">
    <location>
        <begin position="1"/>
        <end position="134"/>
    </location>
</feature>
<feature type="region of interest" description="Disordered" evidence="2">
    <location>
        <begin position="110"/>
        <end position="134"/>
    </location>
</feature>
<feature type="compositionally biased region" description="Pro residues" evidence="2">
    <location>
        <begin position="125"/>
        <end position="134"/>
    </location>
</feature>
<accession>A7HBQ2</accession>